<accession>P0A776</accession>
<accession>Q2MA07</accession>
<accession>Q46930</accession>
<reference key="1">
    <citation type="journal article" date="1997" name="Science">
        <title>The complete genome sequence of Escherichia coli K-12.</title>
        <authorList>
            <person name="Blattner F.R."/>
            <person name="Plunkett G. III"/>
            <person name="Bloch C.A."/>
            <person name="Perna N.T."/>
            <person name="Burland V."/>
            <person name="Riley M."/>
            <person name="Collado-Vides J."/>
            <person name="Glasner J.D."/>
            <person name="Rode C.K."/>
            <person name="Mayhew G.F."/>
            <person name="Gregor J."/>
            <person name="Davis N.W."/>
            <person name="Kirkpatrick H.A."/>
            <person name="Goeden M.A."/>
            <person name="Rose D.J."/>
            <person name="Mau B."/>
            <person name="Shao Y."/>
        </authorList>
    </citation>
    <scope>NUCLEOTIDE SEQUENCE [LARGE SCALE GENOMIC DNA]</scope>
    <source>
        <strain>K12 / MG1655 / ATCC 47076</strain>
    </source>
</reference>
<reference key="2">
    <citation type="journal article" date="2006" name="Mol. Syst. Biol.">
        <title>Highly accurate genome sequences of Escherichia coli K-12 strains MG1655 and W3110.</title>
        <authorList>
            <person name="Hayashi K."/>
            <person name="Morooka N."/>
            <person name="Yamamoto Y."/>
            <person name="Fujita K."/>
            <person name="Isono K."/>
            <person name="Choi S."/>
            <person name="Ohtsubo E."/>
            <person name="Baba T."/>
            <person name="Wanner B.L."/>
            <person name="Mori H."/>
            <person name="Horiuchi T."/>
        </authorList>
    </citation>
    <scope>NUCLEOTIDE SEQUENCE [LARGE SCALE GENOMIC DNA]</scope>
    <source>
        <strain>K12 / W3110 / ATCC 27325 / DSM 5911</strain>
    </source>
</reference>
<reference key="3">
    <citation type="journal article" date="2001" name="J. Biol. Chem.">
        <title>The gene ygdP, associated with the invasiveness of Escherichia coli K1, designates a Nudix hydrolase, Orf176, active on adenosine (5')-pentaphospho-(5')-adenosine (Ap5A).</title>
        <authorList>
            <person name="Bessman M.J."/>
            <person name="Walsh J.D."/>
            <person name="Dunn C.A."/>
            <person name="Swaminathan J."/>
            <person name="Weldon J.E."/>
            <person name="Shen J."/>
        </authorList>
    </citation>
    <scope>FUNCTION</scope>
    <scope>CATALYTIC ACTIVITY</scope>
    <scope>COFACTOR</scope>
    <scope>BIOPHYSICOCHEMICAL PROPERTIES</scope>
    <scope>SUBUNIT</scope>
    <source>
        <strain>K12</strain>
    </source>
</reference>
<reference key="4">
    <citation type="journal article" date="2000" name="Mol. Microbiol.">
        <title>Identification of Escherichia coli K1 genes contributing to human brain microvascular endothelial cell invasion by differential fluorescence induction.</title>
        <authorList>
            <person name="Badger J.L."/>
            <person name="Wass C.A."/>
            <person name="Kim K.S."/>
        </authorList>
    </citation>
    <scope>FUNCTION IN PATHOGENIC STRAIN K1</scope>
</reference>
<reference key="5">
    <citation type="journal article" date="2008" name="Nature">
        <title>The bacterial enzyme RppH triggers messenger RNA degradation by 5' pyrophosphate removal.</title>
        <authorList>
            <person name="Deana A."/>
            <person name="Celesnik H."/>
            <person name="Belasco J.G."/>
        </authorList>
    </citation>
    <scope>FUNCTION AS A RNA PYROPHOSPHOHYDROLASE</scope>
    <scope>MUTAGENESIS OF GLU-53</scope>
</reference>
<reference key="6">
    <citation type="journal article" date="2017" name="J. Bacteriol.">
        <title>The rph-1-encoded truncated RNase PH protein inhibits RNase P maturation of pre-tRNAs with short leader sequences in the absence of RppH.</title>
        <authorList>
            <person name="Bowden K.E."/>
            <person name="Wiese N.S."/>
            <person name="Perwez T."/>
            <person name="Mohanty B.K."/>
            <person name="Kushner S.R."/>
        </authorList>
    </citation>
    <scope>FUNCTION IN TRNA PROCESSING</scope>
    <scope>SUBUNIT</scope>
    <scope>DISRUPTION PHENOTYPE</scope>
    <source>
        <strain>K12 / MG1655 / MG1693</strain>
    </source>
</reference>
<comment type="function">
    <text evidence="1 2 3 4">Master regulator of 5'-end-dependent mRNA decay (PubMed:18202662). Accelerates the degradation of transcripts by removing pyrophosphate from the 5'-end of triphosphorylated RNA, leading to a more labile monophosphorylated state that can stimulate subsequent ribonuclease cleavage (PubMed:18202662). Preferentially hydrolyzes diadenosine penta-phosphate with ATP as one of the reaction products (PubMed:11479323). Also able to hydrolyze diadenosine hexa- and tetra-phosphate (PubMed:11479323). Has no activity on diadenosine tri-phosphate, ADP-ribose, NADH and UDP-glucose (PubMed:11479323). In an RNase PH (rph) wild-type strain background, RppH is not required for maturation of tRNAs; however, strains with the truncated rph allele (for example K12 W1485 and its derivatives MG1655 and W3110) require RppH for maturation of certain monocistronic tRNAs with short (&lt;5 nucleotides) leader sequences (PubMed:28808133). In the meningitis causing strain E.coli K1, has been shown to play a role in HBMEC (human brain microvascular endothelial cells) invasion in vitro (PubMed:10760174).</text>
</comment>
<comment type="cofactor">
    <cofactor evidence="2">
        <name>Mg(2+)</name>
        <dbReference type="ChEBI" id="CHEBI:18420"/>
    </cofactor>
    <cofactor evidence="2">
        <name>Zn(2+)</name>
        <dbReference type="ChEBI" id="CHEBI:29105"/>
    </cofactor>
    <cofactor evidence="2">
        <name>Mn(2+)</name>
        <dbReference type="ChEBI" id="CHEBI:29035"/>
    </cofactor>
    <text evidence="2">Magnesium or zinc. Manganese can be used to a lesser extent.</text>
</comment>
<comment type="biophysicochemical properties">
    <phDependence>
        <text evidence="2">Optimum pH is 8.5-9.0.</text>
    </phDependence>
</comment>
<comment type="subunit">
    <text evidence="2 4">Monomer (PubMed:11479323). No interaction between this protein and catalytically inactive RNase PH was detected by immunoprecipitation (PubMed:28808133).</text>
</comment>
<comment type="disruption phenotype">
    <text evidence="4">Altered 5'-processing of primary pre-tRNA transcripts with short (&lt;5 nucleotides) leaders; in the presence of the truncated inactive allele encoded by rph in strains derived from K12 W1485, including strains MG1655 and W3110 (PubMed:28808133). In the presence of wild-type (catalytically active) RNase PH no effect on processing (PubMed:28808133). No effect on growth rate, a slightly stronger effect is seen when combined with the inactive rph allele (PubMed:28808133).</text>
</comment>
<comment type="similarity">
    <text evidence="6">Belongs to the Nudix hydrolase family. RppH subfamily.</text>
</comment>
<name>RPPH_ECOLI</name>
<protein>
    <recommendedName>
        <fullName>RNA pyrophosphohydrolase</fullName>
        <ecNumber evidence="2">3.6.1.-</ecNumber>
    </recommendedName>
    <alternativeName>
        <fullName>(Di)nucleoside polyphosphate hydrolase</fullName>
    </alternativeName>
    <alternativeName>
        <fullName>Ap5A pyrophosphatase</fullName>
    </alternativeName>
</protein>
<keyword id="KW-0002">3D-structure</keyword>
<keyword id="KW-0378">Hydrolase</keyword>
<keyword id="KW-0460">Magnesium</keyword>
<keyword id="KW-0464">Manganese</keyword>
<keyword id="KW-1185">Reference proteome</keyword>
<keyword id="KW-0819">tRNA processing</keyword>
<keyword id="KW-0862">Zinc</keyword>
<feature type="chain" id="PRO_0000057005" description="RNA pyrophosphohydrolase">
    <location>
        <begin position="1"/>
        <end position="176"/>
    </location>
</feature>
<feature type="domain" description="Nudix hydrolase">
    <location>
        <begin position="6"/>
        <end position="149"/>
    </location>
</feature>
<feature type="short sequence motif" description="Nudix box">
    <location>
        <begin position="38"/>
        <end position="59"/>
    </location>
</feature>
<feature type="mutagenesis site" description="Loss of function." evidence="3">
    <original>E</original>
    <variation>A</variation>
    <location>
        <position position="53"/>
    </location>
</feature>
<feature type="strand" evidence="8">
    <location>
        <begin position="6"/>
        <end position="16"/>
    </location>
</feature>
<feature type="strand" evidence="8">
    <location>
        <begin position="18"/>
        <end position="27"/>
    </location>
</feature>
<feature type="turn" evidence="7">
    <location>
        <begin position="28"/>
        <end position="30"/>
    </location>
</feature>
<feature type="strand" evidence="7">
    <location>
        <begin position="32"/>
        <end position="34"/>
    </location>
</feature>
<feature type="strand" evidence="8">
    <location>
        <begin position="37"/>
        <end position="39"/>
    </location>
</feature>
<feature type="helix" evidence="8">
    <location>
        <begin position="46"/>
        <end position="58"/>
    </location>
</feature>
<feature type="helix" evidence="8">
    <location>
        <begin position="62"/>
        <end position="64"/>
    </location>
</feature>
<feature type="strand" evidence="8">
    <location>
        <begin position="65"/>
        <end position="70"/>
    </location>
</feature>
<feature type="strand" evidence="8">
    <location>
        <begin position="75"/>
        <end position="78"/>
    </location>
</feature>
<feature type="helix" evidence="8">
    <location>
        <begin position="81"/>
        <end position="83"/>
    </location>
</feature>
<feature type="strand" evidence="9">
    <location>
        <begin position="88"/>
        <end position="90"/>
    </location>
</feature>
<feature type="strand" evidence="8">
    <location>
        <begin position="94"/>
        <end position="104"/>
    </location>
</feature>
<feature type="helix" evidence="8">
    <location>
        <begin position="108"/>
        <end position="110"/>
    </location>
</feature>
<feature type="strand" evidence="8">
    <location>
        <begin position="116"/>
        <end position="118"/>
    </location>
</feature>
<feature type="strand" evidence="8">
    <location>
        <begin position="120"/>
        <end position="128"/>
    </location>
</feature>
<feature type="helix" evidence="8">
    <location>
        <begin position="131"/>
        <end position="135"/>
    </location>
</feature>
<feature type="helix" evidence="8">
    <location>
        <begin position="138"/>
        <end position="140"/>
    </location>
</feature>
<feature type="helix" evidence="8">
    <location>
        <begin position="141"/>
        <end position="159"/>
    </location>
</feature>
<evidence type="ECO:0000269" key="1">
    <source>
    </source>
</evidence>
<evidence type="ECO:0000269" key="2">
    <source>
    </source>
</evidence>
<evidence type="ECO:0000269" key="3">
    <source>
    </source>
</evidence>
<evidence type="ECO:0000269" key="4">
    <source>
    </source>
</evidence>
<evidence type="ECO:0000303" key="5">
    <source>
    </source>
</evidence>
<evidence type="ECO:0000305" key="6"/>
<evidence type="ECO:0007829" key="7">
    <source>
        <dbReference type="PDB" id="2KDW"/>
    </source>
</evidence>
<evidence type="ECO:0007829" key="8">
    <source>
        <dbReference type="PDB" id="4S2X"/>
    </source>
</evidence>
<evidence type="ECO:0007829" key="9">
    <source>
        <dbReference type="PDB" id="6VCQ"/>
    </source>
</evidence>
<proteinExistence type="evidence at protein level"/>
<sequence>MIDDDGYRPNVGIVICNRQGQVMWARRFGQHSWQFPQGGINPGESAEQAMYRELFEEVGLSRKDVRILASTRNWLRYKLPKRLVRWDTKPVCIGQKQKWFLLQLVSGDAEINMQTSSTPEFDGWRWVSYWYPVRQVVSFKRDVYRRVMKEFASVVMSLQENTPKPQNASAYRRKRG</sequence>
<organism>
    <name type="scientific">Escherichia coli (strain K12)</name>
    <dbReference type="NCBI Taxonomy" id="83333"/>
    <lineage>
        <taxon>Bacteria</taxon>
        <taxon>Pseudomonadati</taxon>
        <taxon>Pseudomonadota</taxon>
        <taxon>Gammaproteobacteria</taxon>
        <taxon>Enterobacterales</taxon>
        <taxon>Enterobacteriaceae</taxon>
        <taxon>Escherichia</taxon>
    </lineage>
</organism>
<gene>
    <name evidence="5" type="primary">rppH</name>
    <name type="synonym">nudH</name>
    <name type="synonym">ygdP</name>
    <name type="ordered locus">b2830</name>
    <name type="ordered locus">JW2798</name>
</gene>
<dbReference type="EC" id="3.6.1.-" evidence="2"/>
<dbReference type="EMBL" id="U29581">
    <property type="protein sequence ID" value="AAB40477.1"/>
    <property type="molecule type" value="Genomic_DNA"/>
</dbReference>
<dbReference type="EMBL" id="U00096">
    <property type="protein sequence ID" value="AAC75869.1"/>
    <property type="molecule type" value="Genomic_DNA"/>
</dbReference>
<dbReference type="EMBL" id="AP009048">
    <property type="protein sequence ID" value="BAE76899.1"/>
    <property type="molecule type" value="Genomic_DNA"/>
</dbReference>
<dbReference type="PIR" id="G65065">
    <property type="entry name" value="G65065"/>
</dbReference>
<dbReference type="RefSeq" id="NP_417307.1">
    <property type="nucleotide sequence ID" value="NC_000913.3"/>
</dbReference>
<dbReference type="RefSeq" id="WP_000564489.1">
    <property type="nucleotide sequence ID" value="NZ_STEB01000034.1"/>
</dbReference>
<dbReference type="PDB" id="2KDV">
    <property type="method" value="NMR"/>
    <property type="chains" value="A=1-164"/>
</dbReference>
<dbReference type="PDB" id="2KDW">
    <property type="method" value="NMR"/>
    <property type="chains" value="A=1-164"/>
</dbReference>
<dbReference type="PDB" id="4S2V">
    <property type="method" value="X-ray"/>
    <property type="resolution" value="1.70 A"/>
    <property type="chains" value="A=1-156"/>
</dbReference>
<dbReference type="PDB" id="4S2W">
    <property type="method" value="X-ray"/>
    <property type="resolution" value="1.99 A"/>
    <property type="chains" value="A=1-158"/>
</dbReference>
<dbReference type="PDB" id="4S2X">
    <property type="method" value="X-ray"/>
    <property type="resolution" value="1.50 A"/>
    <property type="chains" value="A=1-158"/>
</dbReference>
<dbReference type="PDB" id="4S2Y">
    <property type="method" value="X-ray"/>
    <property type="resolution" value="1.60 A"/>
    <property type="chains" value="A=1-158"/>
</dbReference>
<dbReference type="PDB" id="5YGU">
    <property type="method" value="X-ray"/>
    <property type="resolution" value="2.30 A"/>
    <property type="chains" value="B=1-158"/>
</dbReference>
<dbReference type="PDB" id="6D13">
    <property type="method" value="X-ray"/>
    <property type="resolution" value="3.06 A"/>
    <property type="chains" value="B=1-176"/>
</dbReference>
<dbReference type="PDB" id="6D1Q">
    <property type="method" value="X-ray"/>
    <property type="resolution" value="2.15 A"/>
    <property type="chains" value="B=1-159"/>
</dbReference>
<dbReference type="PDB" id="6D1V">
    <property type="method" value="X-ray"/>
    <property type="resolution" value="1.81 A"/>
    <property type="chains" value="B=1-159"/>
</dbReference>
<dbReference type="PDB" id="6VCK">
    <property type="method" value="X-ray"/>
    <property type="resolution" value="2.69 A"/>
    <property type="chains" value="B=1-160"/>
</dbReference>
<dbReference type="PDB" id="6VCL">
    <property type="method" value="X-ray"/>
    <property type="resolution" value="2.06 A"/>
    <property type="chains" value="B=1-160"/>
</dbReference>
<dbReference type="PDB" id="6VCM">
    <property type="method" value="X-ray"/>
    <property type="resolution" value="2.35 A"/>
    <property type="chains" value="B=1-160"/>
</dbReference>
<dbReference type="PDB" id="6VCN">
    <property type="method" value="X-ray"/>
    <property type="resolution" value="1.90 A"/>
    <property type="chains" value="A=1-160"/>
</dbReference>
<dbReference type="PDB" id="6VCO">
    <property type="method" value="X-ray"/>
    <property type="resolution" value="1.70 A"/>
    <property type="chains" value="A=1-160"/>
</dbReference>
<dbReference type="PDB" id="6VCP">
    <property type="method" value="X-ray"/>
    <property type="resolution" value="1.70 A"/>
    <property type="chains" value="A=1-160"/>
</dbReference>
<dbReference type="PDB" id="6VCQ">
    <property type="method" value="X-ray"/>
    <property type="resolution" value="1.60 A"/>
    <property type="chains" value="A=1-160"/>
</dbReference>
<dbReference type="PDB" id="6VCR">
    <property type="method" value="X-ray"/>
    <property type="resolution" value="1.60 A"/>
    <property type="chains" value="A=1-160"/>
</dbReference>
<dbReference type="PDB" id="7SP3">
    <property type="method" value="X-ray"/>
    <property type="resolution" value="1.60 A"/>
    <property type="chains" value="A=1-158"/>
</dbReference>
<dbReference type="PDBsum" id="2KDV"/>
<dbReference type="PDBsum" id="2KDW"/>
<dbReference type="PDBsum" id="4S2V"/>
<dbReference type="PDBsum" id="4S2W"/>
<dbReference type="PDBsum" id="4S2X"/>
<dbReference type="PDBsum" id="4S2Y"/>
<dbReference type="PDBsum" id="5YGU"/>
<dbReference type="PDBsum" id="6D13"/>
<dbReference type="PDBsum" id="6D1Q"/>
<dbReference type="PDBsum" id="6D1V"/>
<dbReference type="PDBsum" id="6VCK"/>
<dbReference type="PDBsum" id="6VCL"/>
<dbReference type="PDBsum" id="6VCM"/>
<dbReference type="PDBsum" id="6VCN"/>
<dbReference type="PDBsum" id="6VCO"/>
<dbReference type="PDBsum" id="6VCP"/>
<dbReference type="PDBsum" id="6VCQ"/>
<dbReference type="PDBsum" id="6VCR"/>
<dbReference type="PDBsum" id="7SP3"/>
<dbReference type="SMR" id="P0A776"/>
<dbReference type="BioGRID" id="4263204">
    <property type="interactions" value="62"/>
</dbReference>
<dbReference type="BioGRID" id="851628">
    <property type="interactions" value="2"/>
</dbReference>
<dbReference type="DIP" id="DIP-47855N"/>
<dbReference type="FunCoup" id="P0A776">
    <property type="interactions" value="336"/>
</dbReference>
<dbReference type="IntAct" id="P0A776">
    <property type="interactions" value="55"/>
</dbReference>
<dbReference type="STRING" id="511145.b2830"/>
<dbReference type="jPOST" id="P0A776"/>
<dbReference type="PaxDb" id="511145-b2830"/>
<dbReference type="EnsemblBacteria" id="AAC75869">
    <property type="protein sequence ID" value="AAC75869"/>
    <property type="gene ID" value="b2830"/>
</dbReference>
<dbReference type="GeneID" id="75203778"/>
<dbReference type="GeneID" id="947300"/>
<dbReference type="KEGG" id="ecj:JW2798"/>
<dbReference type="KEGG" id="eco:b2830"/>
<dbReference type="KEGG" id="ecoc:C3026_15535"/>
<dbReference type="PATRIC" id="fig|1411691.4.peg.3905"/>
<dbReference type="EchoBASE" id="EB2896"/>
<dbReference type="eggNOG" id="COG0494">
    <property type="taxonomic scope" value="Bacteria"/>
</dbReference>
<dbReference type="HOGENOM" id="CLU_087195_3_2_6"/>
<dbReference type="InParanoid" id="P0A776"/>
<dbReference type="OMA" id="PCVGIML"/>
<dbReference type="OrthoDB" id="9816040at2"/>
<dbReference type="PhylomeDB" id="P0A776"/>
<dbReference type="BioCyc" id="EcoCyc:G7459-MONOMER"/>
<dbReference type="BioCyc" id="MetaCyc:G7459-MONOMER"/>
<dbReference type="BRENDA" id="3.6.1.61">
    <property type="organism ID" value="2026"/>
</dbReference>
<dbReference type="EvolutionaryTrace" id="P0A776"/>
<dbReference type="PRO" id="PR:P0A776"/>
<dbReference type="Proteomes" id="UP000000625">
    <property type="component" value="Chromosome"/>
</dbReference>
<dbReference type="GO" id="GO:0005737">
    <property type="term" value="C:cytoplasm"/>
    <property type="evidence" value="ECO:0000318"/>
    <property type="project" value="GO_Central"/>
</dbReference>
<dbReference type="GO" id="GO:0016818">
    <property type="term" value="F:hydrolase activity, acting on acid anhydrides, in phosphorus-containing anhydrides"/>
    <property type="evidence" value="ECO:0000314"/>
    <property type="project" value="EcoliWiki"/>
</dbReference>
<dbReference type="GO" id="GO:0000287">
    <property type="term" value="F:magnesium ion binding"/>
    <property type="evidence" value="ECO:0000314"/>
    <property type="project" value="EcoCyc"/>
</dbReference>
<dbReference type="GO" id="GO:0034353">
    <property type="term" value="F:mRNA 5'-diphosphatase activity"/>
    <property type="evidence" value="ECO:0000314"/>
    <property type="project" value="EcoCyc"/>
</dbReference>
<dbReference type="GO" id="GO:0110153">
    <property type="term" value="F:RNA NAD-cap (NMN-forming) hydrolase activity"/>
    <property type="evidence" value="ECO:0000314"/>
    <property type="project" value="UniProtKB"/>
</dbReference>
<dbReference type="GO" id="GO:0006402">
    <property type="term" value="P:mRNA catabolic process"/>
    <property type="evidence" value="ECO:0000315"/>
    <property type="project" value="EcoCyc"/>
</dbReference>
<dbReference type="GO" id="GO:0110155">
    <property type="term" value="P:NAD-cap decapping"/>
    <property type="evidence" value="ECO:0000314"/>
    <property type="project" value="UniProtKB"/>
</dbReference>
<dbReference type="GO" id="GO:0110154">
    <property type="term" value="P:RNA decapping"/>
    <property type="evidence" value="ECO:0000314"/>
    <property type="project" value="EcoCyc"/>
</dbReference>
<dbReference type="GO" id="GO:0050779">
    <property type="term" value="P:RNA destabilization"/>
    <property type="evidence" value="ECO:0000315"/>
    <property type="project" value="EcoCyc"/>
</dbReference>
<dbReference type="GO" id="GO:0008033">
    <property type="term" value="P:tRNA processing"/>
    <property type="evidence" value="ECO:0007669"/>
    <property type="project" value="UniProtKB-KW"/>
</dbReference>
<dbReference type="CDD" id="cd03671">
    <property type="entry name" value="NUDIX_Ap4A_hydrolase_plant_like"/>
    <property type="match status" value="1"/>
</dbReference>
<dbReference type="FunFam" id="3.90.79.10:FF:000001">
    <property type="entry name" value="RNA pyrophosphohydrolase"/>
    <property type="match status" value="1"/>
</dbReference>
<dbReference type="Gene3D" id="3.90.79.10">
    <property type="entry name" value="Nucleoside Triphosphate Pyrophosphohydrolase"/>
    <property type="match status" value="1"/>
</dbReference>
<dbReference type="HAMAP" id="MF_00298">
    <property type="entry name" value="Nudix_RppH"/>
    <property type="match status" value="1"/>
</dbReference>
<dbReference type="InterPro" id="IPR020476">
    <property type="entry name" value="Nudix_hydrolase"/>
</dbReference>
<dbReference type="InterPro" id="IPR015797">
    <property type="entry name" value="NUDIX_hydrolase-like_dom_sf"/>
</dbReference>
<dbReference type="InterPro" id="IPR020084">
    <property type="entry name" value="NUDIX_hydrolase_CS"/>
</dbReference>
<dbReference type="InterPro" id="IPR000086">
    <property type="entry name" value="NUDIX_hydrolase_dom"/>
</dbReference>
<dbReference type="InterPro" id="IPR022927">
    <property type="entry name" value="RppH"/>
</dbReference>
<dbReference type="NCBIfam" id="NF001934">
    <property type="entry name" value="PRK00714.1-1"/>
    <property type="match status" value="1"/>
</dbReference>
<dbReference type="NCBIfam" id="NF001937">
    <property type="entry name" value="PRK00714.1-4"/>
    <property type="match status" value="1"/>
</dbReference>
<dbReference type="NCBIfam" id="NF001938">
    <property type="entry name" value="PRK00714.1-5"/>
    <property type="match status" value="1"/>
</dbReference>
<dbReference type="PANTHER" id="PTHR23114">
    <property type="entry name" value="M7GPPPN-MRNA HYDROLASE"/>
    <property type="match status" value="1"/>
</dbReference>
<dbReference type="PANTHER" id="PTHR23114:SF17">
    <property type="entry name" value="M7GPPPN-MRNA HYDROLASE"/>
    <property type="match status" value="1"/>
</dbReference>
<dbReference type="Pfam" id="PF00293">
    <property type="entry name" value="NUDIX"/>
    <property type="match status" value="1"/>
</dbReference>
<dbReference type="PRINTS" id="PR00502">
    <property type="entry name" value="NUDIXFAMILY"/>
</dbReference>
<dbReference type="SUPFAM" id="SSF55811">
    <property type="entry name" value="Nudix"/>
    <property type="match status" value="1"/>
</dbReference>
<dbReference type="PROSITE" id="PS51462">
    <property type="entry name" value="NUDIX"/>
    <property type="match status" value="1"/>
</dbReference>
<dbReference type="PROSITE" id="PS00893">
    <property type="entry name" value="NUDIX_BOX"/>
    <property type="match status" value="1"/>
</dbReference>